<evidence type="ECO:0000250" key="1">
    <source>
        <dbReference type="UniProtKB" id="Q53EU6"/>
    </source>
</evidence>
<evidence type="ECO:0000250" key="2">
    <source>
        <dbReference type="UniProtKB" id="Q9D517"/>
    </source>
</evidence>
<evidence type="ECO:0000255" key="3"/>
<evidence type="ECO:0000305" key="4"/>
<organism>
    <name type="scientific">Xenopus laevis</name>
    <name type="common">African clawed frog</name>
    <dbReference type="NCBI Taxonomy" id="8355"/>
    <lineage>
        <taxon>Eukaryota</taxon>
        <taxon>Metazoa</taxon>
        <taxon>Chordata</taxon>
        <taxon>Craniata</taxon>
        <taxon>Vertebrata</taxon>
        <taxon>Euteleostomi</taxon>
        <taxon>Amphibia</taxon>
        <taxon>Batrachia</taxon>
        <taxon>Anura</taxon>
        <taxon>Pipoidea</taxon>
        <taxon>Pipidae</taxon>
        <taxon>Xenopodinae</taxon>
        <taxon>Xenopus</taxon>
        <taxon>Xenopus</taxon>
    </lineage>
</organism>
<accession>Q68F37</accession>
<name>GPAT3_XENLA</name>
<sequence length="446" mass="50631">MEDFKTIACNIFIIWLTLVIVLILLPSMFGSSLGISEVYMKILVKVLEWATLRIQKGFKDKEKLSASNGIIQRDKSPMETEIECLRQSRSQDIREGDFELGDVFYFAKKGFEAIVEDEVTQRFSSEELISWNLLTRTNNNFHYVSLRVTLIWVLGLCVRYCILLPLRITLATIGISWLVLGATLVGQLPNSRMKSWFSELVHLMCCRICARALSSAIQYHNKENKPKKGGICVANHTSPIDIIILANDGCYAMVGQVHGGLMGIIQRAMARACPHVWFERSEMRDRHLVTERLREHVSDKSKLPILIFPEGTCINNTSVMMFKKGSFEIGGTIYPVAIKYDPQFGDAFWNSSKNSMVSYLLRMMTSWALKCNVWYLPPVNRQDGEDAVQFANRVKSAIAKQGGLVELPWDGGLKRGKVKDSFKEEQQKNYSRIIAGENKSLKPTTH</sequence>
<protein>
    <recommendedName>
        <fullName evidence="1">Glycerol-3-phosphate acyltransferase 3</fullName>
        <shortName>GPAT-3</shortName>
        <ecNumber evidence="1">2.3.1.15</ecNumber>
    </recommendedName>
    <alternativeName>
        <fullName evidence="1">1-acyl-sn-glycerol-3-phosphate O-acyltransferase 10</fullName>
        <shortName evidence="1">AGPAT 10</shortName>
    </alternativeName>
    <alternativeName>
        <fullName>1-acyl-sn-glycerol-3-phosphate O-acyltransferase 9</fullName>
        <shortName>1-AGP acyltransferase 9</shortName>
        <shortName>1-AGPAT 9</shortName>
        <ecNumber evidence="1">2.3.1.51</ecNumber>
    </alternativeName>
    <alternativeName>
        <fullName>Lysophosphatidic acid acyltransferase theta</fullName>
        <shortName>LPAAT-theta</shortName>
    </alternativeName>
</protein>
<feature type="chain" id="PRO_0000291576" description="Glycerol-3-phosphate acyltransferase 3">
    <location>
        <begin position="1"/>
        <end position="446"/>
    </location>
</feature>
<feature type="transmembrane region" description="Helical" evidence="3">
    <location>
        <begin position="11"/>
        <end position="31"/>
    </location>
</feature>
<feature type="transmembrane region" description="Helical" evidence="3">
    <location>
        <begin position="146"/>
        <end position="166"/>
    </location>
</feature>
<feature type="transmembrane region" description="Helical" evidence="3">
    <location>
        <begin position="168"/>
        <end position="188"/>
    </location>
</feature>
<feature type="short sequence motif" description="HXXXXD motif" evidence="2">
    <location>
        <begin position="236"/>
        <end position="241"/>
    </location>
</feature>
<reference key="1">
    <citation type="submission" date="2004-08" db="EMBL/GenBank/DDBJ databases">
        <authorList>
            <consortium name="NIH - Xenopus Gene Collection (XGC) project"/>
        </authorList>
    </citation>
    <scope>NUCLEOTIDE SEQUENCE [LARGE SCALE MRNA]</scope>
    <source>
        <tissue>Kidney</tissue>
    </source>
</reference>
<comment type="function">
    <text evidence="1">Converts glycerol-3-phosphate to 1-acyl-sn-glycerol-3-phosphate (lysophosphatidic acid or LPA) by incorporating an acyl moiety at the sn-1 position of the glycerol backbone. Also converts LPA into 1,2-diacyl-sn-glycerol-3-phosphate (phosphatidic acid or PA) by incorporating an acyl moiety at the sn-2 position of the glycerol backbone. Protects cells against lipotoxicity.</text>
</comment>
<comment type="catalytic activity">
    <reaction evidence="1">
        <text>sn-glycerol 3-phosphate + an acyl-CoA = a 1-acyl-sn-glycero-3-phosphate + CoA</text>
        <dbReference type="Rhea" id="RHEA:15325"/>
        <dbReference type="ChEBI" id="CHEBI:57287"/>
        <dbReference type="ChEBI" id="CHEBI:57597"/>
        <dbReference type="ChEBI" id="CHEBI:57970"/>
        <dbReference type="ChEBI" id="CHEBI:58342"/>
        <dbReference type="EC" id="2.3.1.15"/>
    </reaction>
    <physiologicalReaction direction="left-to-right" evidence="1">
        <dbReference type="Rhea" id="RHEA:15326"/>
    </physiologicalReaction>
</comment>
<comment type="catalytic activity">
    <reaction evidence="1">
        <text>a 1-acyl-sn-glycero-3-phosphate + an acyl-CoA = a 1,2-diacyl-sn-glycero-3-phosphate + CoA</text>
        <dbReference type="Rhea" id="RHEA:19709"/>
        <dbReference type="ChEBI" id="CHEBI:57287"/>
        <dbReference type="ChEBI" id="CHEBI:57970"/>
        <dbReference type="ChEBI" id="CHEBI:58342"/>
        <dbReference type="ChEBI" id="CHEBI:58608"/>
        <dbReference type="EC" id="2.3.1.51"/>
    </reaction>
    <physiologicalReaction direction="left-to-right" evidence="1">
        <dbReference type="Rhea" id="RHEA:19710"/>
    </physiologicalReaction>
</comment>
<comment type="catalytic activity">
    <reaction evidence="1">
        <text>dodecanoyl-CoA + sn-glycerol 3-phosphate = 1-dodecanoyl-sn-glycerol 3-phosphate + CoA</text>
        <dbReference type="Rhea" id="RHEA:35727"/>
        <dbReference type="ChEBI" id="CHEBI:57287"/>
        <dbReference type="ChEBI" id="CHEBI:57375"/>
        <dbReference type="ChEBI" id="CHEBI:57597"/>
        <dbReference type="ChEBI" id="CHEBI:72682"/>
    </reaction>
    <physiologicalReaction direction="left-to-right" evidence="1">
        <dbReference type="Rhea" id="RHEA:35728"/>
    </physiologicalReaction>
</comment>
<comment type="catalytic activity">
    <reaction evidence="1">
        <text>sn-glycerol 3-phosphate + hexadecanoyl-CoA = 1-hexadecanoyl-sn-glycero-3-phosphate + CoA</text>
        <dbReference type="Rhea" id="RHEA:35723"/>
        <dbReference type="ChEBI" id="CHEBI:57287"/>
        <dbReference type="ChEBI" id="CHEBI:57379"/>
        <dbReference type="ChEBI" id="CHEBI:57518"/>
        <dbReference type="ChEBI" id="CHEBI:57597"/>
    </reaction>
    <physiologicalReaction direction="left-to-right" evidence="1">
        <dbReference type="Rhea" id="RHEA:35724"/>
    </physiologicalReaction>
</comment>
<comment type="catalytic activity">
    <reaction evidence="1">
        <text>sn-glycerol 3-phosphate + (9Z)-octadecenoyl-CoA = 1-(9Z-octadecenoyl)-sn-glycero-3-phosphate + CoA</text>
        <dbReference type="Rhea" id="RHEA:37199"/>
        <dbReference type="ChEBI" id="CHEBI:57287"/>
        <dbReference type="ChEBI" id="CHEBI:57387"/>
        <dbReference type="ChEBI" id="CHEBI:57597"/>
        <dbReference type="ChEBI" id="CHEBI:74544"/>
    </reaction>
    <physiologicalReaction direction="left-to-right" evidence="1">
        <dbReference type="Rhea" id="RHEA:37200"/>
    </physiologicalReaction>
</comment>
<comment type="catalytic activity">
    <reaction evidence="1">
        <text>(9Z,12Z)-octadecadienoyl-CoA + sn-glycerol 3-phosphate = 1-(9Z,12Z)-octadecadienoyl-sn-glycero-3-phosphate + CoA</text>
        <dbReference type="Rhea" id="RHEA:37203"/>
        <dbReference type="ChEBI" id="CHEBI:57287"/>
        <dbReference type="ChEBI" id="CHEBI:57383"/>
        <dbReference type="ChEBI" id="CHEBI:57597"/>
        <dbReference type="ChEBI" id="CHEBI:74547"/>
    </reaction>
    <physiologicalReaction direction="left-to-right" evidence="1">
        <dbReference type="Rhea" id="RHEA:37204"/>
    </physiologicalReaction>
</comment>
<comment type="catalytic activity">
    <reaction evidence="1">
        <text>1-tetradecanoyl-sn-glycerol 3-phosphate + (9Z)-octadecenoyl-CoA = 1-tetradecanoyl-2-(9Z)-octadecenoyl-sn-glycero-3-phosphate + CoA</text>
        <dbReference type="Rhea" id="RHEA:37187"/>
        <dbReference type="ChEBI" id="CHEBI:57287"/>
        <dbReference type="ChEBI" id="CHEBI:57387"/>
        <dbReference type="ChEBI" id="CHEBI:72683"/>
        <dbReference type="ChEBI" id="CHEBI:74586"/>
    </reaction>
    <physiologicalReaction direction="left-to-right" evidence="1">
        <dbReference type="Rhea" id="RHEA:37188"/>
    </physiologicalReaction>
</comment>
<comment type="catalytic activity">
    <reaction evidence="1">
        <text>1-hexadecanoyl-sn-glycero-3-phosphate + (9Z)-octadecenoyl-CoA = 1-hexadecanoyl-2-(9Z-octadecenoyl)-sn-glycero-3-phosphate + CoA</text>
        <dbReference type="Rhea" id="RHEA:33187"/>
        <dbReference type="ChEBI" id="CHEBI:57287"/>
        <dbReference type="ChEBI" id="CHEBI:57387"/>
        <dbReference type="ChEBI" id="CHEBI:57518"/>
        <dbReference type="ChEBI" id="CHEBI:64839"/>
    </reaction>
    <physiologicalReaction direction="left-to-right" evidence="1">
        <dbReference type="Rhea" id="RHEA:33188"/>
    </physiologicalReaction>
</comment>
<comment type="catalytic activity">
    <reaction evidence="1">
        <text>1-(9Z-octadecenoyl)-sn-glycero-3-phosphate + (9Z)-octadecenoyl-CoA = 1,2-di-(9Z-octadecenoyl)-sn-glycero-3-phosphate + CoA</text>
        <dbReference type="Rhea" id="RHEA:37131"/>
        <dbReference type="ChEBI" id="CHEBI:57287"/>
        <dbReference type="ChEBI" id="CHEBI:57387"/>
        <dbReference type="ChEBI" id="CHEBI:74544"/>
        <dbReference type="ChEBI" id="CHEBI:74546"/>
    </reaction>
    <physiologicalReaction direction="left-to-right" evidence="1">
        <dbReference type="Rhea" id="RHEA:37132"/>
    </physiologicalReaction>
</comment>
<comment type="catalytic activity">
    <reaction evidence="1">
        <text>1-(6Z,9Z,12Z-octadecatrienoyl)-sn-glycero-3-phosphate + (9Z)-octadecenoyl-CoA = (6Z,9Z,12Z)-octadecatrienoyl-2-(9Z)-octadecenoyl-sn-glycero-3-phosphate + CoA</text>
        <dbReference type="Rhea" id="RHEA:37179"/>
        <dbReference type="ChEBI" id="CHEBI:57287"/>
        <dbReference type="ChEBI" id="CHEBI:57387"/>
        <dbReference type="ChEBI" id="CHEBI:74581"/>
        <dbReference type="ChEBI" id="CHEBI:74582"/>
    </reaction>
    <physiologicalReaction direction="left-to-right" evidence="1">
        <dbReference type="Rhea" id="RHEA:37180"/>
    </physiologicalReaction>
</comment>
<comment type="catalytic activity">
    <reaction evidence="1">
        <text>1-(9Z,12Z,15Z)-octadecatrienoyl-sn-glycero-3-phosphate + (9Z)-octadecenoyl-CoA = 1-(9Z,12Z,15Z)-octadecatrienoyl-2-(9Z)-octadecenoyl-sn-glycero-3-phosphate + CoA</text>
        <dbReference type="Rhea" id="RHEA:37139"/>
        <dbReference type="ChEBI" id="CHEBI:57287"/>
        <dbReference type="ChEBI" id="CHEBI:57387"/>
        <dbReference type="ChEBI" id="CHEBI:74549"/>
        <dbReference type="ChEBI" id="CHEBI:74550"/>
    </reaction>
    <physiologicalReaction direction="left-to-right" evidence="1">
        <dbReference type="Rhea" id="RHEA:37140"/>
    </physiologicalReaction>
</comment>
<comment type="catalytic activity">
    <reaction evidence="1">
        <text>1-(9Z-octadecenoyl)-sn-glycero-3-phosphate + tetradecanoyl-CoA = 1-(9Z)-octadecenoyl-2-tetradecanoyl-sn-glycero-3-phosphate + CoA</text>
        <dbReference type="Rhea" id="RHEA:37171"/>
        <dbReference type="ChEBI" id="CHEBI:57287"/>
        <dbReference type="ChEBI" id="CHEBI:57385"/>
        <dbReference type="ChEBI" id="CHEBI:74544"/>
        <dbReference type="ChEBI" id="CHEBI:74579"/>
    </reaction>
    <physiologicalReaction direction="left-to-right" evidence="1">
        <dbReference type="Rhea" id="RHEA:37172"/>
    </physiologicalReaction>
</comment>
<comment type="catalytic activity">
    <reaction evidence="1">
        <text>1-(9Z-octadecenoyl)-sn-glycero-3-phosphate + hexadecanoyl-CoA = 1-(9Z)-octadecenoyl-2-hexadecanoyl-sn-glycero-3-phosphate + CoA</text>
        <dbReference type="Rhea" id="RHEA:37143"/>
        <dbReference type="ChEBI" id="CHEBI:57287"/>
        <dbReference type="ChEBI" id="CHEBI:57379"/>
        <dbReference type="ChEBI" id="CHEBI:74544"/>
        <dbReference type="ChEBI" id="CHEBI:74551"/>
    </reaction>
    <physiologicalReaction direction="left-to-right" evidence="1">
        <dbReference type="Rhea" id="RHEA:37144"/>
    </physiologicalReaction>
</comment>
<comment type="catalytic activity">
    <reaction evidence="1">
        <text>1-(9Z-octadecenoyl)-sn-glycero-3-phosphate + octadecanoyl-CoA = 1-(9Z-octadecenoyl)-2-octadecanoyl-sn-glycero-3-phosphate + CoA</text>
        <dbReference type="Rhea" id="RHEA:37147"/>
        <dbReference type="ChEBI" id="CHEBI:57287"/>
        <dbReference type="ChEBI" id="CHEBI:57394"/>
        <dbReference type="ChEBI" id="CHEBI:74544"/>
        <dbReference type="ChEBI" id="CHEBI:74552"/>
    </reaction>
    <physiologicalReaction direction="left-to-right" evidence="1">
        <dbReference type="Rhea" id="RHEA:37148"/>
    </physiologicalReaction>
</comment>
<comment type="catalytic activity">
    <reaction evidence="1">
        <text>1-(9Z-octadecenoyl)-sn-glycero-3-phosphate + (9Z,12Z)-octadecadienoyl-CoA = 1-(9Z)-octadecenoyl-2-(9Z,12Z)-octadecadienoyl-sn-glycero-3-phosphate + CoA</text>
        <dbReference type="Rhea" id="RHEA:37159"/>
        <dbReference type="ChEBI" id="CHEBI:57287"/>
        <dbReference type="ChEBI" id="CHEBI:57383"/>
        <dbReference type="ChEBI" id="CHEBI:74544"/>
        <dbReference type="ChEBI" id="CHEBI:74563"/>
    </reaction>
    <physiologicalReaction direction="left-to-right" evidence="1">
        <dbReference type="Rhea" id="RHEA:37160"/>
    </physiologicalReaction>
</comment>
<comment type="catalytic activity">
    <reaction evidence="1">
        <text>1-(5Z,8Z,11Z,14Z-eicosatetraenoyl)-sn-glycero-3-phosphate + (9Z)-octadecenoyl-CoA = 1-(5Z,8Z,11Z,14Z)-eicosatetraenoyl-2-(9Z)-octadecenoyl-sn-glycero-3-phosphate + CoA</text>
        <dbReference type="Rhea" id="RHEA:37455"/>
        <dbReference type="ChEBI" id="CHEBI:57287"/>
        <dbReference type="ChEBI" id="CHEBI:57387"/>
        <dbReference type="ChEBI" id="CHEBI:74938"/>
        <dbReference type="ChEBI" id="CHEBI:74941"/>
    </reaction>
    <physiologicalReaction direction="left-to-right" evidence="1">
        <dbReference type="Rhea" id="RHEA:37456"/>
    </physiologicalReaction>
</comment>
<comment type="pathway">
    <text>Glycerolipid metabolism; triacylglycerol biosynthesis.</text>
</comment>
<comment type="pathway">
    <text>Phospholipid metabolism; CDP-diacylglycerol biosynthesis; CDP-diacylglycerol from sn-glycerol 3-phosphate: step 1/3.</text>
</comment>
<comment type="subcellular location">
    <subcellularLocation>
        <location evidence="1">Endoplasmic reticulum membrane</location>
        <topology evidence="3">Multi-pass membrane protein</topology>
    </subcellularLocation>
</comment>
<comment type="domain">
    <text evidence="2">The HXXXXD motif is essential for acyltransferase activity and may constitute the binding site for the phosphate moiety of the glycerol-3-phosphate.</text>
</comment>
<comment type="similarity">
    <text evidence="4">Belongs to the 1-acyl-sn-glycerol-3-phosphate acyltransferase family.</text>
</comment>
<keyword id="KW-0012">Acyltransferase</keyword>
<keyword id="KW-0256">Endoplasmic reticulum</keyword>
<keyword id="KW-0444">Lipid biosynthesis</keyword>
<keyword id="KW-0443">Lipid metabolism</keyword>
<keyword id="KW-0472">Membrane</keyword>
<keyword id="KW-0594">Phospholipid biosynthesis</keyword>
<keyword id="KW-1208">Phospholipid metabolism</keyword>
<keyword id="KW-1185">Reference proteome</keyword>
<keyword id="KW-0808">Transferase</keyword>
<keyword id="KW-0812">Transmembrane</keyword>
<keyword id="KW-1133">Transmembrane helix</keyword>
<dbReference type="EC" id="2.3.1.15" evidence="1"/>
<dbReference type="EC" id="2.3.1.51" evidence="1"/>
<dbReference type="EMBL" id="BC080008">
    <property type="protein sequence ID" value="AAH80008.1"/>
    <property type="molecule type" value="mRNA"/>
</dbReference>
<dbReference type="RefSeq" id="NP_001087492.1">
    <property type="nucleotide sequence ID" value="NM_001094023.1"/>
</dbReference>
<dbReference type="GeneID" id="447316"/>
<dbReference type="KEGG" id="xla:447316"/>
<dbReference type="AGR" id="Xenbase:XB-GENE-993437"/>
<dbReference type="CTD" id="447316"/>
<dbReference type="Xenbase" id="XB-GENE-993437">
    <property type="gene designation" value="gpat3.L"/>
</dbReference>
<dbReference type="OrthoDB" id="10051137at2759"/>
<dbReference type="UniPathway" id="UPA00282"/>
<dbReference type="UniPathway" id="UPA00557">
    <property type="reaction ID" value="UER00612"/>
</dbReference>
<dbReference type="Proteomes" id="UP000186698">
    <property type="component" value="Chromosome 1L"/>
</dbReference>
<dbReference type="Bgee" id="447316">
    <property type="expression patterns" value="Expressed in kidney and 16 other cell types or tissues"/>
</dbReference>
<dbReference type="GO" id="GO:0005783">
    <property type="term" value="C:endoplasmic reticulum"/>
    <property type="evidence" value="ECO:0000250"/>
    <property type="project" value="UniProtKB"/>
</dbReference>
<dbReference type="GO" id="GO:0005789">
    <property type="term" value="C:endoplasmic reticulum membrane"/>
    <property type="evidence" value="ECO:0000250"/>
    <property type="project" value="UniProtKB"/>
</dbReference>
<dbReference type="GO" id="GO:0003841">
    <property type="term" value="F:1-acylglycerol-3-phosphate O-acyltransferase activity"/>
    <property type="evidence" value="ECO:0000250"/>
    <property type="project" value="UniProtKB"/>
</dbReference>
<dbReference type="GO" id="GO:0004366">
    <property type="term" value="F:glycerol-3-phosphate O-acyltransferase activity"/>
    <property type="evidence" value="ECO:0000250"/>
    <property type="project" value="UniProtKB"/>
</dbReference>
<dbReference type="GO" id="GO:0016024">
    <property type="term" value="P:CDP-diacylglycerol biosynthetic process"/>
    <property type="evidence" value="ECO:0007669"/>
    <property type="project" value="UniProtKB-UniPathway"/>
</dbReference>
<dbReference type="GO" id="GO:0019432">
    <property type="term" value="P:triglyceride biosynthetic process"/>
    <property type="evidence" value="ECO:0000250"/>
    <property type="project" value="UniProtKB"/>
</dbReference>
<dbReference type="CDD" id="cd07991">
    <property type="entry name" value="LPLAT_LPCAT1-like"/>
    <property type="match status" value="1"/>
</dbReference>
<dbReference type="InterPro" id="IPR045252">
    <property type="entry name" value="LPCAT1-like"/>
</dbReference>
<dbReference type="InterPro" id="IPR002123">
    <property type="entry name" value="Plipid/glycerol_acylTrfase"/>
</dbReference>
<dbReference type="PANTHER" id="PTHR23063:SF10">
    <property type="entry name" value="GLYCEROL-3-PHOSPHATE ACYLTRANSFERASE 3"/>
    <property type="match status" value="1"/>
</dbReference>
<dbReference type="PANTHER" id="PTHR23063">
    <property type="entry name" value="PHOSPHOLIPID ACYLTRANSFERASE"/>
    <property type="match status" value="1"/>
</dbReference>
<dbReference type="Pfam" id="PF01553">
    <property type="entry name" value="Acyltransferase"/>
    <property type="match status" value="1"/>
</dbReference>
<dbReference type="SMART" id="SM00563">
    <property type="entry name" value="PlsC"/>
    <property type="match status" value="1"/>
</dbReference>
<dbReference type="SUPFAM" id="SSF69593">
    <property type="entry name" value="Glycerol-3-phosphate (1)-acyltransferase"/>
    <property type="match status" value="1"/>
</dbReference>
<gene>
    <name evidence="1" type="primary">gpat3</name>
    <name type="synonym">agpat9</name>
</gene>
<proteinExistence type="evidence at transcript level"/>